<feature type="chain" id="PRO_0000382426" description="Uncharacterized protein At1g10890">
    <location>
        <begin position="1"/>
        <end position="280"/>
    </location>
</feature>
<feature type="region of interest" description="Disordered" evidence="1">
    <location>
        <begin position="1"/>
        <end position="124"/>
    </location>
</feature>
<feature type="region of interest" description="Disordered" evidence="1">
    <location>
        <begin position="177"/>
        <end position="280"/>
    </location>
</feature>
<feature type="compositionally biased region" description="Basic residues" evidence="1">
    <location>
        <begin position="16"/>
        <end position="36"/>
    </location>
</feature>
<feature type="compositionally biased region" description="Basic residues" evidence="1">
    <location>
        <begin position="48"/>
        <end position="83"/>
    </location>
</feature>
<feature type="compositionally biased region" description="Basic and acidic residues" evidence="1">
    <location>
        <begin position="102"/>
        <end position="124"/>
    </location>
</feature>
<feature type="compositionally biased region" description="Basic and acidic residues" evidence="1">
    <location>
        <begin position="182"/>
        <end position="259"/>
    </location>
</feature>
<organism>
    <name type="scientific">Arabidopsis thaliana</name>
    <name type="common">Mouse-ear cress</name>
    <dbReference type="NCBI Taxonomy" id="3702"/>
    <lineage>
        <taxon>Eukaryota</taxon>
        <taxon>Viridiplantae</taxon>
        <taxon>Streptophyta</taxon>
        <taxon>Embryophyta</taxon>
        <taxon>Tracheophyta</taxon>
        <taxon>Spermatophyta</taxon>
        <taxon>Magnoliopsida</taxon>
        <taxon>eudicotyledons</taxon>
        <taxon>Gunneridae</taxon>
        <taxon>Pentapetalae</taxon>
        <taxon>rosids</taxon>
        <taxon>malvids</taxon>
        <taxon>Brassicales</taxon>
        <taxon>Brassicaceae</taxon>
        <taxon>Camelineae</taxon>
        <taxon>Arabidopsis</taxon>
    </lineage>
</organism>
<protein>
    <recommendedName>
        <fullName>Uncharacterized protein At1g10890</fullName>
    </recommendedName>
</protein>
<keyword id="KW-1185">Reference proteome</keyword>
<name>Y1089_ARATH</name>
<comment type="sequence caution" evidence="2">
    <conflict type="erroneous gene model prediction">
        <sequence resource="EMBL-CDS" id="AAB65488"/>
    </conflict>
    <text>The predicted gene has been split into 2 genes: At1g10890 and At1g10895.</text>
</comment>
<comment type="sequence caution" evidence="2">
    <conflict type="erroneous gene model prediction">
        <sequence resource="EMBL-CDS" id="AEE28660"/>
    </conflict>
</comment>
<dbReference type="EMBL" id="U95973">
    <property type="protein sequence ID" value="AAB65488.1"/>
    <property type="status" value="ALT_SEQ"/>
    <property type="molecule type" value="Genomic_DNA"/>
</dbReference>
<dbReference type="EMBL" id="CP002684">
    <property type="protein sequence ID" value="AEE28660.1"/>
    <property type="status" value="ALT_SEQ"/>
    <property type="molecule type" value="Genomic_DNA"/>
</dbReference>
<dbReference type="EMBL" id="CP002684">
    <property type="protein sequence ID" value="ANM60471.1"/>
    <property type="molecule type" value="Genomic_DNA"/>
</dbReference>
<dbReference type="PIR" id="F86242">
    <property type="entry name" value="F86242"/>
</dbReference>
<dbReference type="RefSeq" id="NP_001322756.1">
    <property type="nucleotide sequence ID" value="NM_001331938.1"/>
</dbReference>
<dbReference type="RefSeq" id="NP_172558.4">
    <property type="nucleotide sequence ID" value="NM_100964.5"/>
</dbReference>
<dbReference type="SMR" id="P0CB26"/>
<dbReference type="FunCoup" id="P0CB26">
    <property type="interactions" value="153"/>
</dbReference>
<dbReference type="GlyGen" id="P0CB26">
    <property type="glycosylation" value="1 site"/>
</dbReference>
<dbReference type="iPTMnet" id="P0CB26"/>
<dbReference type="ProteomicsDB" id="242517"/>
<dbReference type="EnsemblPlants" id="AT1G10890.4">
    <property type="protein sequence ID" value="AT1G10890.4"/>
    <property type="gene ID" value="AT1G10890"/>
</dbReference>
<dbReference type="GeneID" id="837632"/>
<dbReference type="Gramene" id="AT1G10890.4">
    <property type="protein sequence ID" value="AT1G10890.4"/>
    <property type="gene ID" value="AT1G10890"/>
</dbReference>
<dbReference type="KEGG" id="ath:AT1G10890"/>
<dbReference type="Araport" id="AT1G10890"/>
<dbReference type="TAIR" id="AT1G10890"/>
<dbReference type="eggNOG" id="ENOG502QPR5">
    <property type="taxonomic scope" value="Eukaryota"/>
</dbReference>
<dbReference type="HOGENOM" id="CLU_076749_2_0_1"/>
<dbReference type="InParanoid" id="P0CB26"/>
<dbReference type="OMA" id="QMELEMM"/>
<dbReference type="OrthoDB" id="543260at2759"/>
<dbReference type="PhylomeDB" id="P0CB26"/>
<dbReference type="PRO" id="PR:P0CB26"/>
<dbReference type="Proteomes" id="UP000006548">
    <property type="component" value="Chromosome 1"/>
</dbReference>
<dbReference type="ExpressionAtlas" id="P0CB26">
    <property type="expression patterns" value="baseline and differential"/>
</dbReference>
<dbReference type="InterPro" id="IPR033371">
    <property type="entry name" value="ARGLU1"/>
</dbReference>
<dbReference type="PANTHER" id="PTHR31711">
    <property type="entry name" value="ARGININE AND GLUTAMATE-RICH PROTEIN 1"/>
    <property type="match status" value="1"/>
</dbReference>
<dbReference type="PANTHER" id="PTHR31711:SF1">
    <property type="entry name" value="ARGININE AND GLUTAMATE-RICH PROTEIN 1"/>
    <property type="match status" value="1"/>
</dbReference>
<dbReference type="Pfam" id="PF15346">
    <property type="entry name" value="ARGLU"/>
    <property type="match status" value="1"/>
</dbReference>
<sequence>MPRDLSRSRSPSPSPSRRRKHSRSPVRQRHSRRSRRDRSPSPYSSHSYSRRKSRSISPRRHRSRSVTPKRRSPTPKRYKRQKSRSSTPSPAKRSPAATLESAKNRNGEKLKREEEERKRRQREAELKLIEEETVKRVEEAIRKKVEESLQSEKIKMEILTLLEEGRKRLNEEVAAQLEEEKEASLIEAKEKEEREQQEKEERERIAEENLKRVEEAQRKEAMERQRKEEERYRELEELQRQKEEAMRRKKAEEEEERLKQMKLLGKNKSRPKLSFALSSK</sequence>
<accession>P0CB26</accession>
<accession>F4I5Z4</accession>
<accession>O04096</accession>
<evidence type="ECO:0000256" key="1">
    <source>
        <dbReference type="SAM" id="MobiDB-lite"/>
    </source>
</evidence>
<evidence type="ECO:0000305" key="2"/>
<reference key="1">
    <citation type="journal article" date="2000" name="Nature">
        <title>Sequence and analysis of chromosome 1 of the plant Arabidopsis thaliana.</title>
        <authorList>
            <person name="Theologis A."/>
            <person name="Ecker J.R."/>
            <person name="Palm C.J."/>
            <person name="Federspiel N.A."/>
            <person name="Kaul S."/>
            <person name="White O."/>
            <person name="Alonso J."/>
            <person name="Altafi H."/>
            <person name="Araujo R."/>
            <person name="Bowman C.L."/>
            <person name="Brooks S.Y."/>
            <person name="Buehler E."/>
            <person name="Chan A."/>
            <person name="Chao Q."/>
            <person name="Chen H."/>
            <person name="Cheuk R.F."/>
            <person name="Chin C.W."/>
            <person name="Chung M.K."/>
            <person name="Conn L."/>
            <person name="Conway A.B."/>
            <person name="Conway A.R."/>
            <person name="Creasy T.H."/>
            <person name="Dewar K."/>
            <person name="Dunn P."/>
            <person name="Etgu P."/>
            <person name="Feldblyum T.V."/>
            <person name="Feng J.-D."/>
            <person name="Fong B."/>
            <person name="Fujii C.Y."/>
            <person name="Gill J.E."/>
            <person name="Goldsmith A.D."/>
            <person name="Haas B."/>
            <person name="Hansen N.F."/>
            <person name="Hughes B."/>
            <person name="Huizar L."/>
            <person name="Hunter J.L."/>
            <person name="Jenkins J."/>
            <person name="Johnson-Hopson C."/>
            <person name="Khan S."/>
            <person name="Khaykin E."/>
            <person name="Kim C.J."/>
            <person name="Koo H.L."/>
            <person name="Kremenetskaia I."/>
            <person name="Kurtz D.B."/>
            <person name="Kwan A."/>
            <person name="Lam B."/>
            <person name="Langin-Hooper S."/>
            <person name="Lee A."/>
            <person name="Lee J.M."/>
            <person name="Lenz C.A."/>
            <person name="Li J.H."/>
            <person name="Li Y.-P."/>
            <person name="Lin X."/>
            <person name="Liu S.X."/>
            <person name="Liu Z.A."/>
            <person name="Luros J.S."/>
            <person name="Maiti R."/>
            <person name="Marziali A."/>
            <person name="Militscher J."/>
            <person name="Miranda M."/>
            <person name="Nguyen M."/>
            <person name="Nierman W.C."/>
            <person name="Osborne B.I."/>
            <person name="Pai G."/>
            <person name="Peterson J."/>
            <person name="Pham P.K."/>
            <person name="Rizzo M."/>
            <person name="Rooney T."/>
            <person name="Rowley D."/>
            <person name="Sakano H."/>
            <person name="Salzberg S.L."/>
            <person name="Schwartz J.R."/>
            <person name="Shinn P."/>
            <person name="Southwick A.M."/>
            <person name="Sun H."/>
            <person name="Tallon L.J."/>
            <person name="Tambunga G."/>
            <person name="Toriumi M.J."/>
            <person name="Town C.D."/>
            <person name="Utterback T."/>
            <person name="Van Aken S."/>
            <person name="Vaysberg M."/>
            <person name="Vysotskaia V.S."/>
            <person name="Walker M."/>
            <person name="Wu D."/>
            <person name="Yu G."/>
            <person name="Fraser C.M."/>
            <person name="Venter J.C."/>
            <person name="Davis R.W."/>
        </authorList>
    </citation>
    <scope>NUCLEOTIDE SEQUENCE [LARGE SCALE GENOMIC DNA]</scope>
    <source>
        <strain>cv. Columbia</strain>
    </source>
</reference>
<reference key="2">
    <citation type="journal article" date="2017" name="Plant J.">
        <title>Araport11: a complete reannotation of the Arabidopsis thaliana reference genome.</title>
        <authorList>
            <person name="Cheng C.Y."/>
            <person name="Krishnakumar V."/>
            <person name="Chan A.P."/>
            <person name="Thibaud-Nissen F."/>
            <person name="Schobel S."/>
            <person name="Town C.D."/>
        </authorList>
    </citation>
    <scope>GENOME REANNOTATION</scope>
    <source>
        <strain>cv. Columbia</strain>
    </source>
</reference>
<gene>
    <name type="ordered locus">At1g10890</name>
    <name type="ORF">T19D16.19</name>
</gene>
<proteinExistence type="predicted"/>